<name>MNHG1_STAAT</name>
<dbReference type="EMBL" id="CP000730">
    <property type="protein sequence ID" value="ABX28927.1"/>
    <property type="molecule type" value="Genomic_DNA"/>
</dbReference>
<dbReference type="RefSeq" id="WP_000590451.1">
    <property type="nucleotide sequence ID" value="NC_010079.1"/>
</dbReference>
<dbReference type="SMR" id="A8Z053"/>
<dbReference type="GeneID" id="98345267"/>
<dbReference type="KEGG" id="sax:USA300HOU_0906"/>
<dbReference type="HOGENOM" id="CLU_121334_0_3_9"/>
<dbReference type="GO" id="GO:0005886">
    <property type="term" value="C:plasma membrane"/>
    <property type="evidence" value="ECO:0007669"/>
    <property type="project" value="UniProtKB-SubCell"/>
</dbReference>
<dbReference type="GO" id="GO:0015385">
    <property type="term" value="F:sodium:proton antiporter activity"/>
    <property type="evidence" value="ECO:0007669"/>
    <property type="project" value="TreeGrafter"/>
</dbReference>
<dbReference type="InterPro" id="IPR005133">
    <property type="entry name" value="PhaG_MnhG_YufB"/>
</dbReference>
<dbReference type="NCBIfam" id="TIGR01300">
    <property type="entry name" value="CPA3_mnhG_phaG"/>
    <property type="match status" value="1"/>
</dbReference>
<dbReference type="NCBIfam" id="NF009237">
    <property type="entry name" value="PRK12587.1"/>
    <property type="match status" value="1"/>
</dbReference>
<dbReference type="NCBIfam" id="NF009314">
    <property type="entry name" value="PRK12674.1-2"/>
    <property type="match status" value="1"/>
</dbReference>
<dbReference type="PANTHER" id="PTHR34703">
    <property type="entry name" value="ANTIPORTER SUBUNIT MNHG2-RELATED"/>
    <property type="match status" value="1"/>
</dbReference>
<dbReference type="PANTHER" id="PTHR34703:SF1">
    <property type="entry name" value="ANTIPORTER SUBUNIT MNHG2-RELATED"/>
    <property type="match status" value="1"/>
</dbReference>
<dbReference type="Pfam" id="PF03334">
    <property type="entry name" value="PhaG_MnhG_YufB"/>
    <property type="match status" value="1"/>
</dbReference>
<protein>
    <recommendedName>
        <fullName>Na(+)/H(+) antiporter subunit G1</fullName>
    </recommendedName>
    <alternativeName>
        <fullName>Mnh complex subunit G1</fullName>
    </alternativeName>
</protein>
<keyword id="KW-0050">Antiport</keyword>
<keyword id="KW-1003">Cell membrane</keyword>
<keyword id="KW-0375">Hydrogen ion transport</keyword>
<keyword id="KW-0406">Ion transport</keyword>
<keyword id="KW-0472">Membrane</keyword>
<keyword id="KW-0915">Sodium</keyword>
<keyword id="KW-0739">Sodium transport</keyword>
<keyword id="KW-0812">Transmembrane</keyword>
<keyword id="KW-1133">Transmembrane helix</keyword>
<keyword id="KW-0813">Transport</keyword>
<feature type="chain" id="PRO_0000372167" description="Na(+)/H(+) antiporter subunit G1">
    <location>
        <begin position="1"/>
        <end position="118"/>
    </location>
</feature>
<feature type="transmembrane region" description="Helical" evidence="2">
    <location>
        <begin position="4"/>
        <end position="24"/>
    </location>
</feature>
<feature type="transmembrane region" description="Helical" evidence="2">
    <location>
        <begin position="38"/>
        <end position="58"/>
    </location>
</feature>
<feature type="transmembrane region" description="Helical" evidence="2">
    <location>
        <begin position="60"/>
        <end position="80"/>
    </location>
</feature>
<proteinExistence type="inferred from homology"/>
<organism>
    <name type="scientific">Staphylococcus aureus (strain USA300 / TCH1516)</name>
    <dbReference type="NCBI Taxonomy" id="451516"/>
    <lineage>
        <taxon>Bacteria</taxon>
        <taxon>Bacillati</taxon>
        <taxon>Bacillota</taxon>
        <taxon>Bacilli</taxon>
        <taxon>Bacillales</taxon>
        <taxon>Staphylococcaceae</taxon>
        <taxon>Staphylococcus</taxon>
    </lineage>
</organism>
<reference key="1">
    <citation type="journal article" date="2007" name="BMC Microbiol.">
        <title>Subtle genetic changes enhance virulence of methicillin resistant and sensitive Staphylococcus aureus.</title>
        <authorList>
            <person name="Highlander S.K."/>
            <person name="Hulten K.G."/>
            <person name="Qin X."/>
            <person name="Jiang H."/>
            <person name="Yerrapragada S."/>
            <person name="Mason E.O. Jr."/>
            <person name="Shang Y."/>
            <person name="Williams T.M."/>
            <person name="Fortunov R.M."/>
            <person name="Liu Y."/>
            <person name="Igboeli O."/>
            <person name="Petrosino J."/>
            <person name="Tirumalai M."/>
            <person name="Uzman A."/>
            <person name="Fox G.E."/>
            <person name="Cardenas A.M."/>
            <person name="Muzny D.M."/>
            <person name="Hemphill L."/>
            <person name="Ding Y."/>
            <person name="Dugan S."/>
            <person name="Blyth P.R."/>
            <person name="Buhay C.J."/>
            <person name="Dinh H.H."/>
            <person name="Hawes A.C."/>
            <person name="Holder M."/>
            <person name="Kovar C.L."/>
            <person name="Lee S.L."/>
            <person name="Liu W."/>
            <person name="Nazareth L.V."/>
            <person name="Wang Q."/>
            <person name="Zhou J."/>
            <person name="Kaplan S.L."/>
            <person name="Weinstock G.M."/>
        </authorList>
    </citation>
    <scope>NUCLEOTIDE SEQUENCE [LARGE SCALE GENOMIC DNA]</scope>
    <source>
        <strain>USA300 / TCH1516</strain>
    </source>
</reference>
<sequence>MIKIILISLALIFVIIGALISALAAIGLLRLEDVYSRAHAAGKASTLGAMSLLFGTFLYFIATQGFVNMQLIVAIIFVLITGPLSSHMIMKAAYNIKTPYTKKTKVDEISEDLKDTKL</sequence>
<gene>
    <name type="primary">mnhG1</name>
    <name type="ordered locus">USA300HOU_0906</name>
</gene>
<accession>A8Z053</accession>
<comment type="function">
    <text evidence="1">Mnh complex is a Na(+)/H(+) antiporter involved in Na(+) excretion.</text>
</comment>
<comment type="subunit">
    <text evidence="1">May form a heterooligomeric complex that consists of seven subunits: mnhA1, mnhB1, mnhC1, mnhD1, mnhE1, mnhF1 and mnhG1.</text>
</comment>
<comment type="subcellular location">
    <subcellularLocation>
        <location evidence="3">Cell membrane</location>
        <topology evidence="3">Multi-pass membrane protein</topology>
    </subcellularLocation>
</comment>
<comment type="similarity">
    <text evidence="3">Belongs to the CPA3 antiporters (TC 2.A.63) subunit G family.</text>
</comment>
<evidence type="ECO:0000250" key="1"/>
<evidence type="ECO:0000255" key="2"/>
<evidence type="ECO:0000305" key="3"/>